<evidence type="ECO:0000255" key="1">
    <source>
        <dbReference type="HAMAP-Rule" id="MF_04070"/>
    </source>
</evidence>
<evidence type="ECO:0000256" key="2">
    <source>
        <dbReference type="SAM" id="MobiDB-lite"/>
    </source>
</evidence>
<name>NCAP_I75A2</name>
<keyword id="KW-0167">Capsid protein</keyword>
<keyword id="KW-1139">Helical capsid protein</keyword>
<keyword id="KW-1048">Host nucleus</keyword>
<keyword id="KW-0945">Host-virus interaction</keyword>
<keyword id="KW-0687">Ribonucleoprotein</keyword>
<keyword id="KW-0694">RNA-binding</keyword>
<keyword id="KW-0543">Viral nucleoprotein</keyword>
<keyword id="KW-1163">Viral penetration into host nucleus</keyword>
<keyword id="KW-0946">Virion</keyword>
<keyword id="KW-1160">Virus entry into host cell</keyword>
<organismHost>
    <name type="scientific">Aves</name>
    <dbReference type="NCBI Taxonomy" id="8782"/>
</organismHost>
<organismHost>
    <name type="scientific">Homo sapiens</name>
    <name type="common">Human</name>
    <dbReference type="NCBI Taxonomy" id="9606"/>
</organismHost>
<organismHost>
    <name type="scientific">Mysticeti</name>
    <name type="common">baleen whales</name>
    <dbReference type="NCBI Taxonomy" id="9761"/>
</organismHost>
<organismHost>
    <name type="scientific">Phocidae</name>
    <name type="common">true seals</name>
    <dbReference type="NCBI Taxonomy" id="9709"/>
</organismHost>
<organismHost>
    <name type="scientific">Sus scrofa</name>
    <name type="common">Pig</name>
    <dbReference type="NCBI Taxonomy" id="9823"/>
</organismHost>
<proteinExistence type="inferred from homology"/>
<protein>
    <recommendedName>
        <fullName evidence="1">Nucleoprotein</fullName>
    </recommendedName>
    <alternativeName>
        <fullName evidence="1">Nucleocapsid protein</fullName>
        <shortName evidence="1">Protein N</shortName>
    </alternativeName>
</protein>
<organism>
    <name type="scientific">Influenza A virus (strain A/Duck/Hong Kong/7/1975 H3N2)</name>
    <dbReference type="NCBI Taxonomy" id="352551"/>
    <lineage>
        <taxon>Viruses</taxon>
        <taxon>Riboviria</taxon>
        <taxon>Orthornavirae</taxon>
        <taxon>Negarnaviricota</taxon>
        <taxon>Polyploviricotina</taxon>
        <taxon>Insthoviricetes</taxon>
        <taxon>Articulavirales</taxon>
        <taxon>Orthomyxoviridae</taxon>
        <taxon>Alphainfluenzavirus</taxon>
        <taxon>Alphainfluenzavirus influenzae</taxon>
        <taxon>Influenza A virus</taxon>
    </lineage>
</organism>
<feature type="chain" id="PRO_0000079037" description="Nucleoprotein">
    <location>
        <begin position="1"/>
        <end position="498"/>
    </location>
</feature>
<feature type="region of interest" description="Disordered" evidence="2">
    <location>
        <begin position="1"/>
        <end position="21"/>
    </location>
</feature>
<feature type="short sequence motif" description="Unconventional nuclear localization signal" evidence="1">
    <location>
        <begin position="1"/>
        <end position="18"/>
    </location>
</feature>
<feature type="short sequence motif" description="Bipartite nuclear localization signal" evidence="1">
    <location>
        <begin position="198"/>
        <end position="216"/>
    </location>
</feature>
<dbReference type="EMBL" id="M22573">
    <property type="protein sequence ID" value="AAA43097.1"/>
    <property type="molecule type" value="Genomic_RNA"/>
</dbReference>
<dbReference type="SMR" id="P16978"/>
<dbReference type="GO" id="GO:0019029">
    <property type="term" value="C:helical viral capsid"/>
    <property type="evidence" value="ECO:0007669"/>
    <property type="project" value="UniProtKB-UniRule"/>
</dbReference>
<dbReference type="GO" id="GO:0043657">
    <property type="term" value="C:host cell"/>
    <property type="evidence" value="ECO:0007669"/>
    <property type="project" value="GOC"/>
</dbReference>
<dbReference type="GO" id="GO:0042025">
    <property type="term" value="C:host cell nucleus"/>
    <property type="evidence" value="ECO:0007669"/>
    <property type="project" value="UniProtKB-SubCell"/>
</dbReference>
<dbReference type="GO" id="GO:1990904">
    <property type="term" value="C:ribonucleoprotein complex"/>
    <property type="evidence" value="ECO:0007669"/>
    <property type="project" value="UniProtKB-KW"/>
</dbReference>
<dbReference type="GO" id="GO:0019013">
    <property type="term" value="C:viral nucleocapsid"/>
    <property type="evidence" value="ECO:0007669"/>
    <property type="project" value="UniProtKB-UniRule"/>
</dbReference>
<dbReference type="GO" id="GO:0003723">
    <property type="term" value="F:RNA binding"/>
    <property type="evidence" value="ECO:0007669"/>
    <property type="project" value="UniProtKB-UniRule"/>
</dbReference>
<dbReference type="GO" id="GO:0005198">
    <property type="term" value="F:structural molecule activity"/>
    <property type="evidence" value="ECO:0007669"/>
    <property type="project" value="UniProtKB-UniRule"/>
</dbReference>
<dbReference type="GO" id="GO:0046718">
    <property type="term" value="P:symbiont entry into host cell"/>
    <property type="evidence" value="ECO:0007669"/>
    <property type="project" value="UniProtKB-KW"/>
</dbReference>
<dbReference type="GO" id="GO:0075732">
    <property type="term" value="P:viral penetration into host nucleus"/>
    <property type="evidence" value="ECO:0007669"/>
    <property type="project" value="UniProtKB-UniRule"/>
</dbReference>
<dbReference type="HAMAP" id="MF_04070">
    <property type="entry name" value="INFV_NCAP"/>
    <property type="match status" value="1"/>
</dbReference>
<dbReference type="InterPro" id="IPR002141">
    <property type="entry name" value="Flu_NP"/>
</dbReference>
<dbReference type="Pfam" id="PF00506">
    <property type="entry name" value="Flu_NP"/>
    <property type="match status" value="1"/>
</dbReference>
<dbReference type="SUPFAM" id="SSF161003">
    <property type="entry name" value="flu NP-like"/>
    <property type="match status" value="1"/>
</dbReference>
<sequence length="498" mass="56240">MASQGTKRSYEQMETGGERQNATEIRASVGRMVGGIGRFYIQMCTELKLSDYEGRLIQNSITIERMVLSAFDERRNKYLEEHPSAGKDPKKTGGPIYRRRDGKWMRELILYDKEEIRRIWRQANNGEDATAGLTHLMIWHSNLNDATYQRTRALVRTGMDPRMCSLMQGSTLPRRSGAAGAAVKGVGTMVMELIRMVKRGINDRNFWRGENGRRTRIAYERMCNILKGKFQTAAQRAMMDQVRESRNPGNAEIEDLIFLARSALILRGSVAHKSCLPACVYGLAVASGYDFEREGYSLVGIDPFRLLQNSQVFSLIRPNENPAHKSQLVWMACHSAAFEDLRVSSFIRGTRVVPRGQLSTRGVQIASNENMETMDSSTLELRSRYRAIRTRSGGNTNQQRASAGQISVQPTFSVQRNLPFERATIMAAFTGNTEGRTSDMRTEIIRMMESARPEDVSFQGRGVFELSDEKATNPIVPSFDMSNEGSYFFGDNAEEYDN</sequence>
<gene>
    <name evidence="1" type="primary">NP</name>
</gene>
<comment type="function">
    <text evidence="1">Encapsidates the negative strand viral RNA, protecting it from nucleases. The encapsidated genomic RNA is termed the ribonucleoprotein (RNP) and serves as template for transcription and replication. The RNP needs to be localized in the host nucleus to start an infectious cycle, but is too large to diffuse through the nuclear pore complex. NP comprises at least 2 nuclear localization signals that are responsible for the active RNP import into the nucleus through cellular importin alpha/beta pathway. Later in the infection, nclear export of RNPs are mediated through viral proteins NEP interacting with M1 which binds nucleoproteins. It is possible that nucleoprotein binds directly host exportin-1/XPO1 and plays an active role in RNPs nuclear export. M1 interaction with RNP seems to hide nucleoprotein's nuclear localization signals. Soon after a virion infects a new cell, M1 dissociates from the RNP under acidification of the virion driven by M2 protein. Dissociation of M1 from RNP unmasks nucleoprotein's nuclear localization signals, targeting the RNP to the nucleus.</text>
</comment>
<comment type="subunit">
    <text evidence="1">Homomultimerizes to form the nucleocapsid. May bind host exportin-1/XPO1. Binds to viral genomic RNA. Protein-RNA contacts are mediated by a combination of electrostatic interactions between positively charged residues and the phosphate backbone and planar interactions between aromatic side chains and bases.</text>
</comment>
<comment type="subcellular location">
    <subcellularLocation>
        <location evidence="1">Virion</location>
    </subcellularLocation>
    <subcellularLocation>
        <location evidence="1">Host nucleus</location>
    </subcellularLocation>
</comment>
<comment type="PTM">
    <text evidence="1">Late in virus-infected cells, may be cleaved from a 56-kDa protein to a 53-kDa protein by a cellular caspase. This cleavage might be a marker for the onset of apoptosis in infected cells or have a specific function in virus host interaction.</text>
</comment>
<comment type="similarity">
    <text evidence="1">Belongs to the influenza viruses nucleoprotein family.</text>
</comment>
<reference key="1">
    <citation type="journal article" date="1989" name="Virology">
        <title>Two subtypes of nucleoproteins (NP) of influenza A viruses.</title>
        <authorList>
            <person name="Gammelin M."/>
            <person name="Mandler J."/>
            <person name="Scholtissek C."/>
        </authorList>
    </citation>
    <scope>NUCLEOTIDE SEQUENCE [GENOMIC RNA]</scope>
</reference>
<accession>P16978</accession>